<name>Y019_EXIS2</name>
<sequence>MRGMGNMNNMMKQMQKMQKDMAKAQEELKDLTVTGTAGGEMVSVVADGHKNIIDVIIKEEVVDPDDVEMIQDLVLAATNDALKKVDELVSSKMGKFTQGMNMPGMF</sequence>
<accession>B1YGC9</accession>
<dbReference type="EMBL" id="CP001022">
    <property type="protein sequence ID" value="ACB59506.1"/>
    <property type="molecule type" value="Genomic_DNA"/>
</dbReference>
<dbReference type="RefSeq" id="WP_012368932.1">
    <property type="nucleotide sequence ID" value="NC_010556.1"/>
</dbReference>
<dbReference type="SMR" id="B1YGC9"/>
<dbReference type="STRING" id="262543.Exig_0019"/>
<dbReference type="KEGG" id="esi:Exig_0019"/>
<dbReference type="eggNOG" id="COG0718">
    <property type="taxonomic scope" value="Bacteria"/>
</dbReference>
<dbReference type="HOGENOM" id="CLU_140930_1_0_9"/>
<dbReference type="OrthoDB" id="9795263at2"/>
<dbReference type="Proteomes" id="UP000001681">
    <property type="component" value="Chromosome"/>
</dbReference>
<dbReference type="GO" id="GO:0043590">
    <property type="term" value="C:bacterial nucleoid"/>
    <property type="evidence" value="ECO:0007669"/>
    <property type="project" value="UniProtKB-UniRule"/>
</dbReference>
<dbReference type="GO" id="GO:0005829">
    <property type="term" value="C:cytosol"/>
    <property type="evidence" value="ECO:0007669"/>
    <property type="project" value="TreeGrafter"/>
</dbReference>
<dbReference type="GO" id="GO:0003677">
    <property type="term" value="F:DNA binding"/>
    <property type="evidence" value="ECO:0007669"/>
    <property type="project" value="UniProtKB-UniRule"/>
</dbReference>
<dbReference type="FunFam" id="3.30.1310.10:FF:000002">
    <property type="entry name" value="Nucleoid-associated protein IKC_06587"/>
    <property type="match status" value="1"/>
</dbReference>
<dbReference type="Gene3D" id="3.30.1310.10">
    <property type="entry name" value="Nucleoid-associated protein YbaB-like domain"/>
    <property type="match status" value="1"/>
</dbReference>
<dbReference type="HAMAP" id="MF_00274">
    <property type="entry name" value="DNA_YbaB_EbfC"/>
    <property type="match status" value="1"/>
</dbReference>
<dbReference type="InterPro" id="IPR036894">
    <property type="entry name" value="YbaB-like_sf"/>
</dbReference>
<dbReference type="InterPro" id="IPR004401">
    <property type="entry name" value="YbaB/EbfC"/>
</dbReference>
<dbReference type="NCBIfam" id="TIGR00103">
    <property type="entry name" value="DNA_YbaB_EbfC"/>
    <property type="match status" value="1"/>
</dbReference>
<dbReference type="PANTHER" id="PTHR33449">
    <property type="entry name" value="NUCLEOID-ASSOCIATED PROTEIN YBAB"/>
    <property type="match status" value="1"/>
</dbReference>
<dbReference type="PANTHER" id="PTHR33449:SF1">
    <property type="entry name" value="NUCLEOID-ASSOCIATED PROTEIN YBAB"/>
    <property type="match status" value="1"/>
</dbReference>
<dbReference type="Pfam" id="PF02575">
    <property type="entry name" value="YbaB_DNA_bd"/>
    <property type="match status" value="1"/>
</dbReference>
<dbReference type="PIRSF" id="PIRSF004555">
    <property type="entry name" value="UCP004555"/>
    <property type="match status" value="1"/>
</dbReference>
<dbReference type="SUPFAM" id="SSF82607">
    <property type="entry name" value="YbaB-like"/>
    <property type="match status" value="1"/>
</dbReference>
<comment type="function">
    <text evidence="1">Binds to DNA and alters its conformation. May be involved in regulation of gene expression, nucleoid organization and DNA protection.</text>
</comment>
<comment type="subunit">
    <text evidence="1">Homodimer.</text>
</comment>
<comment type="subcellular location">
    <subcellularLocation>
        <location evidence="1">Cytoplasm</location>
        <location evidence="1">Nucleoid</location>
    </subcellularLocation>
</comment>
<comment type="similarity">
    <text evidence="1">Belongs to the YbaB/EbfC family.</text>
</comment>
<keyword id="KW-0963">Cytoplasm</keyword>
<keyword id="KW-0238">DNA-binding</keyword>
<keyword id="KW-1185">Reference proteome</keyword>
<feature type="chain" id="PRO_1000204770" description="Nucleoid-associated protein Exig_0019">
    <location>
        <begin position="1"/>
        <end position="106"/>
    </location>
</feature>
<feature type="region of interest" description="Disordered" evidence="2">
    <location>
        <begin position="1"/>
        <end position="23"/>
    </location>
</feature>
<feature type="compositionally biased region" description="Low complexity" evidence="2">
    <location>
        <begin position="1"/>
        <end position="16"/>
    </location>
</feature>
<proteinExistence type="inferred from homology"/>
<gene>
    <name type="ordered locus">Exig_0019</name>
</gene>
<organism>
    <name type="scientific">Exiguobacterium sibiricum (strain DSM 17290 / CCUG 55495 / CIP 109462 / JCM 13490 / 255-15)</name>
    <dbReference type="NCBI Taxonomy" id="262543"/>
    <lineage>
        <taxon>Bacteria</taxon>
        <taxon>Bacillati</taxon>
        <taxon>Bacillota</taxon>
        <taxon>Bacilli</taxon>
        <taxon>Bacillales</taxon>
        <taxon>Bacillales Family XII. Incertae Sedis</taxon>
        <taxon>Exiguobacterium</taxon>
    </lineage>
</organism>
<evidence type="ECO:0000255" key="1">
    <source>
        <dbReference type="HAMAP-Rule" id="MF_00274"/>
    </source>
</evidence>
<evidence type="ECO:0000256" key="2">
    <source>
        <dbReference type="SAM" id="MobiDB-lite"/>
    </source>
</evidence>
<protein>
    <recommendedName>
        <fullName evidence="1">Nucleoid-associated protein Exig_0019</fullName>
    </recommendedName>
</protein>
<reference key="1">
    <citation type="submission" date="2008-04" db="EMBL/GenBank/DDBJ databases">
        <title>Complete sequence of chromosome of Exiguobacterium sibiricum 255-15.</title>
        <authorList>
            <consortium name="US DOE Joint Genome Institute"/>
            <person name="Copeland A."/>
            <person name="Lucas S."/>
            <person name="Lapidus A."/>
            <person name="Glavina del Rio T."/>
            <person name="Dalin E."/>
            <person name="Tice H."/>
            <person name="Bruce D."/>
            <person name="Goodwin L."/>
            <person name="Pitluck S."/>
            <person name="Kiss H."/>
            <person name="Chertkov O."/>
            <person name="Monk C."/>
            <person name="Brettin T."/>
            <person name="Detter J.C."/>
            <person name="Han C."/>
            <person name="Kuske C.R."/>
            <person name="Schmutz J."/>
            <person name="Larimer F."/>
            <person name="Land M."/>
            <person name="Hauser L."/>
            <person name="Kyrpides N."/>
            <person name="Mikhailova N."/>
            <person name="Vishnivetskaya T."/>
            <person name="Rodrigues D.F."/>
            <person name="Gilichinsky D."/>
            <person name="Tiedje J."/>
            <person name="Richardson P."/>
        </authorList>
    </citation>
    <scope>NUCLEOTIDE SEQUENCE [LARGE SCALE GENOMIC DNA]</scope>
    <source>
        <strain>DSM 17290 / CCUG 55495 / CIP 109462 / JCM 13490 / 255-15</strain>
    </source>
</reference>